<gene>
    <name evidence="1" type="primary">pnp</name>
    <name type="ordered locus">SP_0588</name>
</gene>
<organism>
    <name type="scientific">Streptococcus pneumoniae serotype 4 (strain ATCC BAA-334 / TIGR4)</name>
    <dbReference type="NCBI Taxonomy" id="170187"/>
    <lineage>
        <taxon>Bacteria</taxon>
        <taxon>Bacillati</taxon>
        <taxon>Bacillota</taxon>
        <taxon>Bacilli</taxon>
        <taxon>Lactobacillales</taxon>
        <taxon>Streptococcaceae</taxon>
        <taxon>Streptococcus</taxon>
    </lineage>
</organism>
<proteinExistence type="inferred from homology"/>
<reference key="1">
    <citation type="journal article" date="2001" name="Science">
        <title>Complete genome sequence of a virulent isolate of Streptococcus pneumoniae.</title>
        <authorList>
            <person name="Tettelin H."/>
            <person name="Nelson K.E."/>
            <person name="Paulsen I.T."/>
            <person name="Eisen J.A."/>
            <person name="Read T.D."/>
            <person name="Peterson S.N."/>
            <person name="Heidelberg J.F."/>
            <person name="DeBoy R.T."/>
            <person name="Haft D.H."/>
            <person name="Dodson R.J."/>
            <person name="Durkin A.S."/>
            <person name="Gwinn M.L."/>
            <person name="Kolonay J.F."/>
            <person name="Nelson W.C."/>
            <person name="Peterson J.D."/>
            <person name="Umayam L.A."/>
            <person name="White O."/>
            <person name="Salzberg S.L."/>
            <person name="Lewis M.R."/>
            <person name="Radune D."/>
            <person name="Holtzapple E.K."/>
            <person name="Khouri H.M."/>
            <person name="Wolf A.M."/>
            <person name="Utterback T.R."/>
            <person name="Hansen C.L."/>
            <person name="McDonald L.A."/>
            <person name="Feldblyum T.V."/>
            <person name="Angiuoli S.V."/>
            <person name="Dickinson T."/>
            <person name="Hickey E.K."/>
            <person name="Holt I.E."/>
            <person name="Loftus B.J."/>
            <person name="Yang F."/>
            <person name="Smith H.O."/>
            <person name="Venter J.C."/>
            <person name="Dougherty B.A."/>
            <person name="Morrison D.A."/>
            <person name="Hollingshead S.K."/>
            <person name="Fraser C.M."/>
        </authorList>
    </citation>
    <scope>NUCLEOTIDE SEQUENCE [LARGE SCALE GENOMIC DNA]</scope>
    <source>
        <strain>ATCC BAA-334 / TIGR4</strain>
    </source>
</reference>
<protein>
    <recommendedName>
        <fullName evidence="1">Polyribonucleotide nucleotidyltransferase</fullName>
        <ecNumber evidence="1">2.7.7.8</ecNumber>
    </recommendedName>
    <alternativeName>
        <fullName evidence="1">Polynucleotide phosphorylase</fullName>
        <shortName evidence="1">PNPase</shortName>
    </alternativeName>
</protein>
<comment type="function">
    <text evidence="1">Involved in mRNA degradation. Catalyzes the phosphorolysis of single-stranded polyribonucleotides processively in the 3'- to 5'-direction.</text>
</comment>
<comment type="catalytic activity">
    <reaction evidence="1">
        <text>RNA(n+1) + phosphate = RNA(n) + a ribonucleoside 5'-diphosphate</text>
        <dbReference type="Rhea" id="RHEA:22096"/>
        <dbReference type="Rhea" id="RHEA-COMP:14527"/>
        <dbReference type="Rhea" id="RHEA-COMP:17342"/>
        <dbReference type="ChEBI" id="CHEBI:43474"/>
        <dbReference type="ChEBI" id="CHEBI:57930"/>
        <dbReference type="ChEBI" id="CHEBI:140395"/>
        <dbReference type="EC" id="2.7.7.8"/>
    </reaction>
</comment>
<comment type="cofactor">
    <cofactor evidence="1">
        <name>Mg(2+)</name>
        <dbReference type="ChEBI" id="CHEBI:18420"/>
    </cofactor>
</comment>
<comment type="subcellular location">
    <subcellularLocation>
        <location evidence="1">Cytoplasm</location>
    </subcellularLocation>
</comment>
<comment type="similarity">
    <text evidence="1">Belongs to the polyribonucleotide nucleotidyltransferase family.</text>
</comment>
<keyword id="KW-0963">Cytoplasm</keyword>
<keyword id="KW-0460">Magnesium</keyword>
<keyword id="KW-0479">Metal-binding</keyword>
<keyword id="KW-0548">Nucleotidyltransferase</keyword>
<keyword id="KW-1185">Reference proteome</keyword>
<keyword id="KW-0694">RNA-binding</keyword>
<keyword id="KW-0808">Transferase</keyword>
<dbReference type="EC" id="2.7.7.8" evidence="1"/>
<dbReference type="EMBL" id="AE005672">
    <property type="protein sequence ID" value="AAK74741.1"/>
    <property type="molecule type" value="Genomic_DNA"/>
</dbReference>
<dbReference type="PIR" id="D95068">
    <property type="entry name" value="D95068"/>
</dbReference>
<dbReference type="RefSeq" id="WP_001827240.1">
    <property type="nucleotide sequence ID" value="NZ_CP155539.1"/>
</dbReference>
<dbReference type="SMR" id="Q97S28"/>
<dbReference type="PaxDb" id="170187-SP_0588"/>
<dbReference type="DNASU" id="930534"/>
<dbReference type="EnsemblBacteria" id="AAK74741">
    <property type="protein sequence ID" value="AAK74741"/>
    <property type="gene ID" value="SP_0588"/>
</dbReference>
<dbReference type="KEGG" id="spn:SP_0588"/>
<dbReference type="eggNOG" id="COG1185">
    <property type="taxonomic scope" value="Bacteria"/>
</dbReference>
<dbReference type="PhylomeDB" id="Q97S28"/>
<dbReference type="BioCyc" id="SPNE170187:G1FZB-607-MONOMER"/>
<dbReference type="Proteomes" id="UP000000585">
    <property type="component" value="Chromosome"/>
</dbReference>
<dbReference type="GO" id="GO:0005829">
    <property type="term" value="C:cytosol"/>
    <property type="evidence" value="ECO:0007669"/>
    <property type="project" value="TreeGrafter"/>
</dbReference>
<dbReference type="GO" id="GO:0000175">
    <property type="term" value="F:3'-5'-RNA exonuclease activity"/>
    <property type="evidence" value="ECO:0007669"/>
    <property type="project" value="TreeGrafter"/>
</dbReference>
<dbReference type="GO" id="GO:0000287">
    <property type="term" value="F:magnesium ion binding"/>
    <property type="evidence" value="ECO:0007669"/>
    <property type="project" value="UniProtKB-UniRule"/>
</dbReference>
<dbReference type="GO" id="GO:0004654">
    <property type="term" value="F:polyribonucleotide nucleotidyltransferase activity"/>
    <property type="evidence" value="ECO:0007669"/>
    <property type="project" value="UniProtKB-UniRule"/>
</dbReference>
<dbReference type="GO" id="GO:0003723">
    <property type="term" value="F:RNA binding"/>
    <property type="evidence" value="ECO:0007669"/>
    <property type="project" value="UniProtKB-UniRule"/>
</dbReference>
<dbReference type="GO" id="GO:0006402">
    <property type="term" value="P:mRNA catabolic process"/>
    <property type="evidence" value="ECO:0007669"/>
    <property type="project" value="UniProtKB-UniRule"/>
</dbReference>
<dbReference type="GO" id="GO:0006396">
    <property type="term" value="P:RNA processing"/>
    <property type="evidence" value="ECO:0007669"/>
    <property type="project" value="InterPro"/>
</dbReference>
<dbReference type="CDD" id="cd02393">
    <property type="entry name" value="KH-I_PNPase"/>
    <property type="match status" value="1"/>
</dbReference>
<dbReference type="CDD" id="cd11363">
    <property type="entry name" value="RNase_PH_PNPase_1"/>
    <property type="match status" value="1"/>
</dbReference>
<dbReference type="CDD" id="cd11364">
    <property type="entry name" value="RNase_PH_PNPase_2"/>
    <property type="match status" value="1"/>
</dbReference>
<dbReference type="FunFam" id="2.40.50.140:FF:000023">
    <property type="entry name" value="Polyribonucleotide nucleotidyltransferase"/>
    <property type="match status" value="1"/>
</dbReference>
<dbReference type="FunFam" id="3.30.1370.10:FF:000001">
    <property type="entry name" value="Polyribonucleotide nucleotidyltransferase"/>
    <property type="match status" value="1"/>
</dbReference>
<dbReference type="FunFam" id="3.30.230.70:FF:000001">
    <property type="entry name" value="Polyribonucleotide nucleotidyltransferase"/>
    <property type="match status" value="1"/>
</dbReference>
<dbReference type="FunFam" id="3.30.230.70:FF:000002">
    <property type="entry name" value="Polyribonucleotide nucleotidyltransferase"/>
    <property type="match status" value="1"/>
</dbReference>
<dbReference type="Gene3D" id="3.30.230.70">
    <property type="entry name" value="GHMP Kinase, N-terminal domain"/>
    <property type="match status" value="2"/>
</dbReference>
<dbReference type="Gene3D" id="3.30.1370.10">
    <property type="entry name" value="K Homology domain, type 1"/>
    <property type="match status" value="1"/>
</dbReference>
<dbReference type="Gene3D" id="2.40.50.140">
    <property type="entry name" value="Nucleic acid-binding proteins"/>
    <property type="match status" value="1"/>
</dbReference>
<dbReference type="HAMAP" id="MF_01595">
    <property type="entry name" value="PNPase"/>
    <property type="match status" value="1"/>
</dbReference>
<dbReference type="InterPro" id="IPR001247">
    <property type="entry name" value="ExoRNase_PH_dom1"/>
</dbReference>
<dbReference type="InterPro" id="IPR015847">
    <property type="entry name" value="ExoRNase_PH_dom2"/>
</dbReference>
<dbReference type="InterPro" id="IPR036345">
    <property type="entry name" value="ExoRNase_PH_dom2_sf"/>
</dbReference>
<dbReference type="InterPro" id="IPR004087">
    <property type="entry name" value="KH_dom"/>
</dbReference>
<dbReference type="InterPro" id="IPR004088">
    <property type="entry name" value="KH_dom_type_1"/>
</dbReference>
<dbReference type="InterPro" id="IPR036612">
    <property type="entry name" value="KH_dom_type_1_sf"/>
</dbReference>
<dbReference type="InterPro" id="IPR012340">
    <property type="entry name" value="NA-bd_OB-fold"/>
</dbReference>
<dbReference type="InterPro" id="IPR012162">
    <property type="entry name" value="PNPase"/>
</dbReference>
<dbReference type="InterPro" id="IPR027408">
    <property type="entry name" value="PNPase/RNase_PH_dom_sf"/>
</dbReference>
<dbReference type="InterPro" id="IPR015848">
    <property type="entry name" value="PNPase_PH_RNA-bd_bac/org-type"/>
</dbReference>
<dbReference type="InterPro" id="IPR036456">
    <property type="entry name" value="PNPase_PH_RNA-bd_sf"/>
</dbReference>
<dbReference type="InterPro" id="IPR020568">
    <property type="entry name" value="Ribosomal_Su5_D2-typ_SF"/>
</dbReference>
<dbReference type="InterPro" id="IPR003029">
    <property type="entry name" value="S1_domain"/>
</dbReference>
<dbReference type="NCBIfam" id="TIGR03591">
    <property type="entry name" value="polynuc_phos"/>
    <property type="match status" value="1"/>
</dbReference>
<dbReference type="NCBIfam" id="NF008805">
    <property type="entry name" value="PRK11824.1"/>
    <property type="match status" value="1"/>
</dbReference>
<dbReference type="PANTHER" id="PTHR11252">
    <property type="entry name" value="POLYRIBONUCLEOTIDE NUCLEOTIDYLTRANSFERASE"/>
    <property type="match status" value="1"/>
</dbReference>
<dbReference type="PANTHER" id="PTHR11252:SF0">
    <property type="entry name" value="POLYRIBONUCLEOTIDE NUCLEOTIDYLTRANSFERASE 1, MITOCHONDRIAL"/>
    <property type="match status" value="1"/>
</dbReference>
<dbReference type="Pfam" id="PF00013">
    <property type="entry name" value="KH_1"/>
    <property type="match status" value="1"/>
</dbReference>
<dbReference type="Pfam" id="PF03726">
    <property type="entry name" value="PNPase"/>
    <property type="match status" value="1"/>
</dbReference>
<dbReference type="Pfam" id="PF01138">
    <property type="entry name" value="RNase_PH"/>
    <property type="match status" value="2"/>
</dbReference>
<dbReference type="Pfam" id="PF03725">
    <property type="entry name" value="RNase_PH_C"/>
    <property type="match status" value="2"/>
</dbReference>
<dbReference type="Pfam" id="PF00575">
    <property type="entry name" value="S1"/>
    <property type="match status" value="1"/>
</dbReference>
<dbReference type="PIRSF" id="PIRSF005499">
    <property type="entry name" value="PNPase"/>
    <property type="match status" value="1"/>
</dbReference>
<dbReference type="SMART" id="SM00322">
    <property type="entry name" value="KH"/>
    <property type="match status" value="1"/>
</dbReference>
<dbReference type="SMART" id="SM00316">
    <property type="entry name" value="S1"/>
    <property type="match status" value="1"/>
</dbReference>
<dbReference type="SUPFAM" id="SSF54791">
    <property type="entry name" value="Eukaryotic type KH-domain (KH-domain type I)"/>
    <property type="match status" value="1"/>
</dbReference>
<dbReference type="SUPFAM" id="SSF50249">
    <property type="entry name" value="Nucleic acid-binding proteins"/>
    <property type="match status" value="1"/>
</dbReference>
<dbReference type="SUPFAM" id="SSF46915">
    <property type="entry name" value="Polynucleotide phosphorylase/guanosine pentaphosphate synthase (PNPase/GPSI), domain 3"/>
    <property type="match status" value="1"/>
</dbReference>
<dbReference type="SUPFAM" id="SSF55666">
    <property type="entry name" value="Ribonuclease PH domain 2-like"/>
    <property type="match status" value="2"/>
</dbReference>
<dbReference type="SUPFAM" id="SSF54211">
    <property type="entry name" value="Ribosomal protein S5 domain 2-like"/>
    <property type="match status" value="2"/>
</dbReference>
<dbReference type="PROSITE" id="PS50084">
    <property type="entry name" value="KH_TYPE_1"/>
    <property type="match status" value="1"/>
</dbReference>
<dbReference type="PROSITE" id="PS50126">
    <property type="entry name" value="S1"/>
    <property type="match status" value="1"/>
</dbReference>
<name>PNP_STRPN</name>
<feature type="chain" id="PRO_0000329869" description="Polyribonucleotide nucleotidyltransferase">
    <location>
        <begin position="1"/>
        <end position="737"/>
    </location>
</feature>
<feature type="domain" description="KH" evidence="1">
    <location>
        <begin position="556"/>
        <end position="615"/>
    </location>
</feature>
<feature type="domain" description="S1 motif" evidence="1">
    <location>
        <begin position="625"/>
        <end position="693"/>
    </location>
</feature>
<feature type="region of interest" description="Disordered" evidence="2">
    <location>
        <begin position="691"/>
        <end position="737"/>
    </location>
</feature>
<feature type="compositionally biased region" description="Basic and acidic residues" evidence="2">
    <location>
        <begin position="700"/>
        <end position="737"/>
    </location>
</feature>
<feature type="binding site" evidence="1">
    <location>
        <position position="489"/>
    </location>
    <ligand>
        <name>Mg(2+)</name>
        <dbReference type="ChEBI" id="CHEBI:18420"/>
    </ligand>
</feature>
<feature type="binding site" evidence="1">
    <location>
        <position position="495"/>
    </location>
    <ligand>
        <name>Mg(2+)</name>
        <dbReference type="ChEBI" id="CHEBI:18420"/>
    </ligand>
</feature>
<accession>Q97S28</accession>
<sequence length="737" mass="81036">MAKQVFQTTFAGRELIVETGQVAKQANGSVVVRYGESTVLTAAVMSKKMATGDFFPLQVNYEEKMYAAGKFPGGFMKREGRPSTDATLTARLIDRPIRPMFAEGFRNEVQVINTVLSYDENASAPMAAMFGSSLALSISDIPFDGPIAGVQVGYVDGQIIINPSQEQAEQSLLELTVAGTKHAINMVESGAKELSEEIMLEALLKGHEAVKELIAFQEEIVAAVGKEKAEVELLHVDAELQAEIIAAYNSDLQKAVQVEEKLAREAATQVVKDQVTAVYEEKYADHEEFDRIMRDVAEILEQMEHAEVRRLITEDKVRPDGRKVDEIRPLDAVVDFLPRVHGSGLFTRGQTQALSVLTLAPMGETQIIDGLDPEYKKRFMHHYNFPQYSVGETGRYGAPGRREIGHGALGERALAQVLPSLEEFPYAIRLVAEVLESNGSSSQASICAGTLALMAGGVPIKAPVAGIAMGLISDGNNYTVLTDIQGLEDHFGDMDFKVAGTRDGITALQMDIKIQGITAEILTEALAQAKKARFEILDVIEATIPEVRPELAPTAPKIDTIKIDVDKIKIVIGKGGETIDKIIAETGVKIDIDEEGNVSIYSSDQDAINRAKEIIAGLVREAKVDEVYRAKVVRIEKFGAFVNLFDKTDALVHISEMAWTRTNRVEDLVEIGDEVDVKVIKIDEKGRIDASMKALLPRPPKPEHDEKGEKSERPHRPRHQKDYKPKKEFTETSKDSE</sequence>
<evidence type="ECO:0000255" key="1">
    <source>
        <dbReference type="HAMAP-Rule" id="MF_01595"/>
    </source>
</evidence>
<evidence type="ECO:0000256" key="2">
    <source>
        <dbReference type="SAM" id="MobiDB-lite"/>
    </source>
</evidence>